<accession>B1YI75</accession>
<comment type="function">
    <text evidence="1">Associates with the EF-Tu.GDP complex and induces the exchange of GDP to GTP. It remains bound to the aminoacyl-tRNA.EF-Tu.GTP complex up to the GTP hydrolysis stage on the ribosome.</text>
</comment>
<comment type="subcellular location">
    <subcellularLocation>
        <location evidence="1">Cytoplasm</location>
    </subcellularLocation>
</comment>
<comment type="similarity">
    <text evidence="1">Belongs to the EF-Ts family.</text>
</comment>
<gene>
    <name evidence="1" type="primary">tsf</name>
    <name type="ordered locus">Exig_1850</name>
</gene>
<sequence length="293" mass="31889">MAITAAMVKELREKTGAGMLDCKKALVEADGDMNAAIDFLREKGIAKAAAKGDRIAAEGLTAVAVNGNKAALVEINSETDFVAKNERFQSLVQNIADAVLRNGSETAEAALASEYEAGKTIDTYISEEASTIGEKISLRRVALFTKEDNAAFGSYLHMGGRIGSVVVVEGTTDETVAKDIAMHIAAARPLYVDRSSVTEEEKAREEKVLTEQALNEGKPANIVEKMIAGRMNKFYEEICLVDQTFVKDPDFKVGKYVESKGGKIVSFVRFEVGEGMEKREENFAEEVMNQLKK</sequence>
<protein>
    <recommendedName>
        <fullName evidence="1">Elongation factor Ts</fullName>
        <shortName evidence="1">EF-Ts</shortName>
    </recommendedName>
</protein>
<keyword id="KW-0963">Cytoplasm</keyword>
<keyword id="KW-0251">Elongation factor</keyword>
<keyword id="KW-0648">Protein biosynthesis</keyword>
<keyword id="KW-1185">Reference proteome</keyword>
<proteinExistence type="inferred from homology"/>
<feature type="chain" id="PRO_1000116738" description="Elongation factor Ts">
    <location>
        <begin position="1"/>
        <end position="293"/>
    </location>
</feature>
<feature type="region of interest" description="Involved in Mg(2+) ion dislocation from EF-Tu" evidence="1">
    <location>
        <begin position="79"/>
        <end position="82"/>
    </location>
</feature>
<evidence type="ECO:0000255" key="1">
    <source>
        <dbReference type="HAMAP-Rule" id="MF_00050"/>
    </source>
</evidence>
<reference key="1">
    <citation type="submission" date="2008-04" db="EMBL/GenBank/DDBJ databases">
        <title>Complete sequence of chromosome of Exiguobacterium sibiricum 255-15.</title>
        <authorList>
            <consortium name="US DOE Joint Genome Institute"/>
            <person name="Copeland A."/>
            <person name="Lucas S."/>
            <person name="Lapidus A."/>
            <person name="Glavina del Rio T."/>
            <person name="Dalin E."/>
            <person name="Tice H."/>
            <person name="Bruce D."/>
            <person name="Goodwin L."/>
            <person name="Pitluck S."/>
            <person name="Kiss H."/>
            <person name="Chertkov O."/>
            <person name="Monk C."/>
            <person name="Brettin T."/>
            <person name="Detter J.C."/>
            <person name="Han C."/>
            <person name="Kuske C.R."/>
            <person name="Schmutz J."/>
            <person name="Larimer F."/>
            <person name="Land M."/>
            <person name="Hauser L."/>
            <person name="Kyrpides N."/>
            <person name="Mikhailova N."/>
            <person name="Vishnivetskaya T."/>
            <person name="Rodrigues D.F."/>
            <person name="Gilichinsky D."/>
            <person name="Tiedje J."/>
            <person name="Richardson P."/>
        </authorList>
    </citation>
    <scope>NUCLEOTIDE SEQUENCE [LARGE SCALE GENOMIC DNA]</scope>
    <source>
        <strain>DSM 17290 / CCUG 55495 / CIP 109462 / JCM 13490 / 255-15</strain>
    </source>
</reference>
<dbReference type="EMBL" id="CP001022">
    <property type="protein sequence ID" value="ACB61302.1"/>
    <property type="molecule type" value="Genomic_DNA"/>
</dbReference>
<dbReference type="RefSeq" id="WP_012370720.1">
    <property type="nucleotide sequence ID" value="NC_010556.1"/>
</dbReference>
<dbReference type="SMR" id="B1YI75"/>
<dbReference type="STRING" id="262543.Exig_1850"/>
<dbReference type="KEGG" id="esi:Exig_1850"/>
<dbReference type="eggNOG" id="COG0264">
    <property type="taxonomic scope" value="Bacteria"/>
</dbReference>
<dbReference type="HOGENOM" id="CLU_047155_0_2_9"/>
<dbReference type="OrthoDB" id="9808348at2"/>
<dbReference type="Proteomes" id="UP000001681">
    <property type="component" value="Chromosome"/>
</dbReference>
<dbReference type="GO" id="GO:0005737">
    <property type="term" value="C:cytoplasm"/>
    <property type="evidence" value="ECO:0007669"/>
    <property type="project" value="UniProtKB-SubCell"/>
</dbReference>
<dbReference type="GO" id="GO:0003746">
    <property type="term" value="F:translation elongation factor activity"/>
    <property type="evidence" value="ECO:0007669"/>
    <property type="project" value="UniProtKB-UniRule"/>
</dbReference>
<dbReference type="CDD" id="cd14275">
    <property type="entry name" value="UBA_EF-Ts"/>
    <property type="match status" value="1"/>
</dbReference>
<dbReference type="FunFam" id="1.10.8.10:FF:000001">
    <property type="entry name" value="Elongation factor Ts"/>
    <property type="match status" value="1"/>
</dbReference>
<dbReference type="Gene3D" id="1.10.286.20">
    <property type="match status" value="1"/>
</dbReference>
<dbReference type="Gene3D" id="1.10.8.10">
    <property type="entry name" value="DNA helicase RuvA subunit, C-terminal domain"/>
    <property type="match status" value="1"/>
</dbReference>
<dbReference type="Gene3D" id="3.30.479.20">
    <property type="entry name" value="Elongation factor Ts, dimerisation domain"/>
    <property type="match status" value="2"/>
</dbReference>
<dbReference type="HAMAP" id="MF_00050">
    <property type="entry name" value="EF_Ts"/>
    <property type="match status" value="1"/>
</dbReference>
<dbReference type="InterPro" id="IPR036402">
    <property type="entry name" value="EF-Ts_dimer_sf"/>
</dbReference>
<dbReference type="InterPro" id="IPR001816">
    <property type="entry name" value="Transl_elong_EFTs/EF1B"/>
</dbReference>
<dbReference type="InterPro" id="IPR014039">
    <property type="entry name" value="Transl_elong_EFTs/EF1B_dimer"/>
</dbReference>
<dbReference type="InterPro" id="IPR018101">
    <property type="entry name" value="Transl_elong_Ts_CS"/>
</dbReference>
<dbReference type="InterPro" id="IPR009060">
    <property type="entry name" value="UBA-like_sf"/>
</dbReference>
<dbReference type="NCBIfam" id="TIGR00116">
    <property type="entry name" value="tsf"/>
    <property type="match status" value="1"/>
</dbReference>
<dbReference type="PANTHER" id="PTHR11741">
    <property type="entry name" value="ELONGATION FACTOR TS"/>
    <property type="match status" value="1"/>
</dbReference>
<dbReference type="PANTHER" id="PTHR11741:SF0">
    <property type="entry name" value="ELONGATION FACTOR TS, MITOCHONDRIAL"/>
    <property type="match status" value="1"/>
</dbReference>
<dbReference type="Pfam" id="PF00889">
    <property type="entry name" value="EF_TS"/>
    <property type="match status" value="1"/>
</dbReference>
<dbReference type="SUPFAM" id="SSF54713">
    <property type="entry name" value="Elongation factor Ts (EF-Ts), dimerisation domain"/>
    <property type="match status" value="2"/>
</dbReference>
<dbReference type="SUPFAM" id="SSF46934">
    <property type="entry name" value="UBA-like"/>
    <property type="match status" value="1"/>
</dbReference>
<dbReference type="PROSITE" id="PS01126">
    <property type="entry name" value="EF_TS_1"/>
    <property type="match status" value="1"/>
</dbReference>
<dbReference type="PROSITE" id="PS01127">
    <property type="entry name" value="EF_TS_2"/>
    <property type="match status" value="1"/>
</dbReference>
<organism>
    <name type="scientific">Exiguobacterium sibiricum (strain DSM 17290 / CCUG 55495 / CIP 109462 / JCM 13490 / 255-15)</name>
    <dbReference type="NCBI Taxonomy" id="262543"/>
    <lineage>
        <taxon>Bacteria</taxon>
        <taxon>Bacillati</taxon>
        <taxon>Bacillota</taxon>
        <taxon>Bacilli</taxon>
        <taxon>Bacillales</taxon>
        <taxon>Bacillales Family XII. Incertae Sedis</taxon>
        <taxon>Exiguobacterium</taxon>
    </lineage>
</organism>
<name>EFTS_EXIS2</name>